<accession>M1W268</accession>
<keyword id="KW-0489">Methyltransferase</keyword>
<keyword id="KW-1185">Reference proteome</keyword>
<keyword id="KW-0949">S-adenosyl-L-methionine</keyword>
<keyword id="KW-0808">Transferase</keyword>
<dbReference type="EC" id="2.1.1.-" evidence="8"/>
<dbReference type="EMBL" id="CAGA01000032">
    <property type="protein sequence ID" value="CCE31571.1"/>
    <property type="molecule type" value="Genomic_DNA"/>
</dbReference>
<dbReference type="SMR" id="M1W268"/>
<dbReference type="STRING" id="1111077.M1W268"/>
<dbReference type="VEuPathDB" id="FungiDB:CPUR_05424"/>
<dbReference type="eggNOG" id="KOG3010">
    <property type="taxonomic scope" value="Eukaryota"/>
</dbReference>
<dbReference type="HOGENOM" id="CLU_049344_0_1_1"/>
<dbReference type="OrthoDB" id="10027013at2759"/>
<dbReference type="PhylomeDB" id="M1W268"/>
<dbReference type="Proteomes" id="UP000016801">
    <property type="component" value="Unassembled WGS sequence"/>
</dbReference>
<dbReference type="GO" id="GO:0008757">
    <property type="term" value="F:S-adenosylmethionine-dependent methyltransferase activity"/>
    <property type="evidence" value="ECO:0007669"/>
    <property type="project" value="InterPro"/>
</dbReference>
<dbReference type="GO" id="GO:0032259">
    <property type="term" value="P:methylation"/>
    <property type="evidence" value="ECO:0007669"/>
    <property type="project" value="UniProtKB-KW"/>
</dbReference>
<dbReference type="CDD" id="cd02440">
    <property type="entry name" value="AdoMet_MTases"/>
    <property type="match status" value="1"/>
</dbReference>
<dbReference type="Gene3D" id="3.40.50.150">
    <property type="entry name" value="Vaccinia Virus protein VP39"/>
    <property type="match status" value="1"/>
</dbReference>
<dbReference type="InterPro" id="IPR051052">
    <property type="entry name" value="Diverse_substrate_MTase"/>
</dbReference>
<dbReference type="InterPro" id="IPR013216">
    <property type="entry name" value="Methyltransf_11"/>
</dbReference>
<dbReference type="InterPro" id="IPR029063">
    <property type="entry name" value="SAM-dependent_MTases_sf"/>
</dbReference>
<dbReference type="PANTHER" id="PTHR44942">
    <property type="entry name" value="METHYLTRANSF_11 DOMAIN-CONTAINING PROTEIN"/>
    <property type="match status" value="1"/>
</dbReference>
<dbReference type="PANTHER" id="PTHR44942:SF4">
    <property type="entry name" value="METHYLTRANSFERASE TYPE 11 DOMAIN-CONTAINING PROTEIN"/>
    <property type="match status" value="1"/>
</dbReference>
<dbReference type="Pfam" id="PF08241">
    <property type="entry name" value="Methyltransf_11"/>
    <property type="match status" value="1"/>
</dbReference>
<dbReference type="SUPFAM" id="SSF53335">
    <property type="entry name" value="S-adenosyl-L-methionine-dependent methyltransferases"/>
    <property type="match status" value="1"/>
</dbReference>
<sequence>MESTIPAKPDFSNKVFAKDERFWLNYLEGRPTAPKSFFDRIYRYHEEHRGHFGTVHDVGAGNGPYAKELRLKFSHVIVSDIAAENVTLAQERLGNDGFQYRVSRLEDADDIPPGSVDMVFATNVLHFCDQDVAMRALARQLRPGGTFACASFGSAYFADEKVQEIYTRIGRAGARLLLKTLDDPERLLRAMDRTDGTYNVAPLDEKLFMPGAQRVDLNMPERGMLSPLPPEMEVTERDESHTRPSDVLIQEEEDEWKFSMNIGQIKAHIESFPFGKDVATELSPLWREMENLVQDRRIDGHWPAKIILATRADASVE</sequence>
<evidence type="ECO:0000250" key="1">
    <source>
        <dbReference type="UniProtKB" id="Q4W944"/>
    </source>
</evidence>
<evidence type="ECO:0000250" key="2">
    <source>
        <dbReference type="UniProtKB" id="Q5BH30"/>
    </source>
</evidence>
<evidence type="ECO:0000255" key="3"/>
<evidence type="ECO:0000269" key="4">
    <source>
    </source>
</evidence>
<evidence type="ECO:0000269" key="5">
    <source>
    </source>
</evidence>
<evidence type="ECO:0000303" key="6">
    <source>
    </source>
</evidence>
<evidence type="ECO:0000305" key="7"/>
<evidence type="ECO:0000305" key="8">
    <source>
    </source>
</evidence>
<protein>
    <recommendedName>
        <fullName evidence="6">Methyltransferase CPUR_05424</fullName>
        <ecNumber evidence="8">2.1.1.-</ecNumber>
    </recommendedName>
    <alternativeName>
        <fullName evidence="6">Ergochrome gene cluster protein CPUR_05424</fullName>
    </alternativeName>
</protein>
<reference key="1">
    <citation type="journal article" date="2013" name="PLoS Genet.">
        <title>Plant-symbiotic fungi as chemical engineers: Multi-genome analysis of the Clavicipitaceae reveals dynamics of alkaloid loci.</title>
        <authorList>
            <person name="Schardl C.L."/>
            <person name="Young C.A."/>
            <person name="Hesse U."/>
            <person name="Amyotte S.G."/>
            <person name="Andreeva K."/>
            <person name="Calie P.J."/>
            <person name="Fleetwood D.J."/>
            <person name="Haws D.C."/>
            <person name="Moore N."/>
            <person name="Oeser B."/>
            <person name="Panaccione D.G."/>
            <person name="Schweri K.K."/>
            <person name="Voisey C.R."/>
            <person name="Farman M.L."/>
            <person name="Jaromczyk J.W."/>
            <person name="Roe B.A."/>
            <person name="O'Sullivan D.M."/>
            <person name="Scott B."/>
            <person name="Tudzynski P."/>
            <person name="An Z."/>
            <person name="Arnaoudova E.G."/>
            <person name="Bullock C.T."/>
            <person name="Charlton N.D."/>
            <person name="Chen L."/>
            <person name="Cox M."/>
            <person name="Dinkins R.D."/>
            <person name="Florea S."/>
            <person name="Glenn A.E."/>
            <person name="Gordon A."/>
            <person name="Gueldener U."/>
            <person name="Harris D.R."/>
            <person name="Hollin W."/>
            <person name="Jaromczyk J."/>
            <person name="Johnson R.D."/>
            <person name="Khan A.K."/>
            <person name="Leistner E."/>
            <person name="Leuchtmann A."/>
            <person name="Li C."/>
            <person name="Liu J."/>
            <person name="Liu J."/>
            <person name="Liu M."/>
            <person name="Mace W."/>
            <person name="Machado C."/>
            <person name="Nagabhyru P."/>
            <person name="Pan J."/>
            <person name="Schmid J."/>
            <person name="Sugawara K."/>
            <person name="Steiner U."/>
            <person name="Takach J.E."/>
            <person name="Tanaka E."/>
            <person name="Webb J.S."/>
            <person name="Wilson E.V."/>
            <person name="Wiseman J.L."/>
            <person name="Yoshida R."/>
            <person name="Zeng Z."/>
        </authorList>
    </citation>
    <scope>NUCLEOTIDE SEQUENCE [LARGE SCALE GENOMIC DNA]</scope>
    <source>
        <strain>20.1</strain>
    </source>
</reference>
<reference key="2">
    <citation type="journal article" date="2016" name="Fungal Biol. Biotechnol.">
        <title>Identification and characterization of the ergochrome gene cluster in the plant pathogenic fungus Claviceps purpurea.</title>
        <authorList>
            <person name="Neubauer L."/>
            <person name="Dopstadt J."/>
            <person name="Humpf H.U."/>
            <person name="Tudzynski P."/>
        </authorList>
    </citation>
    <scope>FUNCTION</scope>
    <scope>INDUCTION</scope>
</reference>
<reference key="3">
    <citation type="journal article" date="2020" name="Org. Lett.">
        <title>Unraveling the fungal strategy for tetrahydroxanthone biosynthesis and diversification.</title>
        <authorList>
            <person name="Wei X."/>
            <person name="Matsuda Y."/>
        </authorList>
    </citation>
    <scope>FUNCTION</scope>
</reference>
<name>PIG2_CLAP2</name>
<gene>
    <name type="ORF">CPUR_05424</name>
</gene>
<feature type="chain" id="PRO_0000443973" description="Methyltransferase CPUR_05424">
    <location>
        <begin position="1"/>
        <end position="317"/>
    </location>
</feature>
<feature type="region of interest" description="Methyltransferase domain" evidence="3">
    <location>
        <begin position="57"/>
        <end position="149"/>
    </location>
</feature>
<comment type="function">
    <text evidence="1 2 4 5">Methyltransferase; part of the ergochrome gene cluster responsible for the typical purple-black color of the ergot sclerotia (PubMed:28955461). The ergochrome gene cluster produces several ergot pigments including the yellow ergochrome secalonic acid and its derivatives, as well as the red anthraquinones endocrocin and clavorubin (PubMed:28955461). The pathway begins with the synthesis of atrochrysone thioester by the polyketide synthase (PKS) CPUR_05437 (By similarity). The atrochrysone carboxyl ACP thioesterase CPUR_05436 then breaks the thioester bond and releases the atrochrysone carboxylic acid from CPUR_05437 (By similarity). The atrochrysone carboxylic acid is then converted to atrochrysone which is further transformed into emodin anthrone (By similarity). The next step is performed by the anthrone oxygenase CPUR_05434 that catalyzes the oxidation of emodinanthrone to emodin (By similarity). Emodin is further modified to yield monodictyphenone via several steps involving CPUR_05427, CPUR_05428, CPUR_05429 and CPUR_05430 (By similarity). The short chain dehydrogenase/reductase CPUR_05418 then catalyzes the C-5 ketoreduction to give the xanthone skeleton of the monomeric units (PubMed:32105084). Ergochromes formation requires further dimerization steps of different xanthone units, probably catalyzed by the cytochrome P450 monooxygenase CPUR_05419 (PubMed:28955461). CPUR_05425, CPUR_05426 and CPUR_05431 are unique to Claviceps, thus it is likely that they are involved in further modification of xanthone units or in their dimerization (PubMed:28955461). The yellow ergochromes and the red anthraquinone pigments endocrocin and clavorubin are products from the same PKS derived precursors and the latter are likely shunt products in the pathway of xanthone biosynthesis (PubMed:28955461). It is proposed that atrochrysone carboxylic acid released from the PKS CPUR_05437 can also be converted to endocrocin anthrone which is further oxidized into endocrocin by CPUR_05435 (By similarity). Endocrocin could be then modified to clavorubin, possibly by CPUR_05423 and CPUR_05431 (PubMed:28955461). Clavorubin is the principal anthraquinone metabolite produced by the cluster with a much higher yield compared to endocrocin (PubMed:28955461).</text>
</comment>
<comment type="pathway">
    <text evidence="8">Pigment biosynthesis.</text>
</comment>
<comment type="induction">
    <text evidence="4">Expression correlates with the formation of the sclerotia and thus the pigment production and is directly regulated by the cluster-specific activator CPUR_05433 (PubMed:28955461).</text>
</comment>
<comment type="similarity">
    <text evidence="7">Belongs to the methyltransferase superfamily.</text>
</comment>
<organism>
    <name type="scientific">Claviceps purpurea (strain 20.1)</name>
    <name type="common">Ergot fungus</name>
    <name type="synonym">Sphacelia segetum</name>
    <dbReference type="NCBI Taxonomy" id="1111077"/>
    <lineage>
        <taxon>Eukaryota</taxon>
        <taxon>Fungi</taxon>
        <taxon>Dikarya</taxon>
        <taxon>Ascomycota</taxon>
        <taxon>Pezizomycotina</taxon>
        <taxon>Sordariomycetes</taxon>
        <taxon>Hypocreomycetidae</taxon>
        <taxon>Hypocreales</taxon>
        <taxon>Clavicipitaceae</taxon>
        <taxon>Claviceps</taxon>
    </lineage>
</organism>
<proteinExistence type="evidence at transcript level"/>